<gene>
    <name type="primary">PTPRT</name>
    <name type="synonym">KIAA0283</name>
</gene>
<organism>
    <name type="scientific">Homo sapiens</name>
    <name type="common">Human</name>
    <dbReference type="NCBI Taxonomy" id="9606"/>
    <lineage>
        <taxon>Eukaryota</taxon>
        <taxon>Metazoa</taxon>
        <taxon>Chordata</taxon>
        <taxon>Craniata</taxon>
        <taxon>Vertebrata</taxon>
        <taxon>Euteleostomi</taxon>
        <taxon>Mammalia</taxon>
        <taxon>Eutheria</taxon>
        <taxon>Euarchontoglires</taxon>
        <taxon>Primates</taxon>
        <taxon>Haplorrhini</taxon>
        <taxon>Catarrhini</taxon>
        <taxon>Hominidae</taxon>
        <taxon>Homo</taxon>
    </lineage>
</organism>
<sequence>MASLAALALSLLLRLQLPPLPGARAQSAAGGCSFDEHYSNCGYSVALGTNGFTWEQINTWEKPMLDQAVPTGSFMMVNSSGRASGQKAHLLLPTLKENDTHCIDFHYYFSSRDRSSPGALNVYVKVNGGPQGNPVWNVSGVVTEGWVKAELAISTFWPHFYQVIFESVSLKGHPGYIAVDEVRVLAHPCRKAPHFLRLQNVEVNVGQNATFQCIAGGKWSQHDKLWLQQWNGRDTALMVTRVVNHRRFSATVSVADTAQRSVSKYRCVIRSDGGSGVSNYAELIVKEPPTPIAPPELLAVGATYLWIKPNANSIIGDGPIILKEVEYRTTTGTWAETHIVDSPNYKLWHLDPDVEYEIRVLLTRPGEGGTGPPGPPLTTRTKCADPVHGPQNVEIVDIRARQLTLQWEPFGYAVTRCHSYNLTVQYQYVFNQQQYEAEEVIQTSSHYTLRGLRPFMTIRLRLLLSNPEGRMESEELVVQTEEDVPGAVPLESIQGGPFEEKIYIQWKPPNETNGVITLYEINYKAVGSLDPSADLSSQRGKVFKLRNETHHLFVGLYPGTTYSFTIKASTAKGFGPPVTTRIATKISAPSMPEYDTDTPLNETDTTITVMLKPAQSRGAPVSVYQLVVKEERLQKSRRAADIIECFSVPVSYRNASSLDSLHYFAAELKPANLPVTQPFTVGDNKTYNGYWNPPLSPLKSYSIYFQALSKANGETKINCVRLATKGASTQNSNTVEPEKQVDNTVKMAGVIAGLLMFIIILLGVMLTIKRRRNAYSYSYYLKLAKKQKETQSGAQREMGPVASADKPTTKLSASRNDEGFSSSSQDVNGFTDGSRGELSQPTLTIQTHPYRTCDPVEMSYPRDQFQPAIRVADLLQHITQMKRGQGYGFKEEYEALPEGQTASWDTAKEDENRNKNRYGNIISYDHSRVRLLVLDGDPHSDYINANYIDGYHRPRHYIATQGPMQETVKDFWRMIWQENSASIVMVTNLVEVGRVKCVRYWPDDTEVYGDIKVTLIETEPLAEYVIRTFTVQKKGYHEIRELRLFHFTSWPDHGVPCYATGLLGFVRQVKFLNPPEAGPIVVHCSAGAGRTGCFIAIDTMLDMAENEGVVDIFNCVRELRAQRVNLVQTEEQYVFVHDAILEACLCGNTAIPVCEFRSLYYNISRLDPQTNSSQIKDEFQTLNIVTPRVRPEDCSIGLLPRNHDKNRSMDVLPLDRCLPFLISVDGESSNYINAALMDSHKQPAAFVVTQHPLPNTVADFWRLVFDYNCSSVVMLNEMDTAQFCMQYWPEKTSGCYGPIQVEFVSADIDEDIIHRIFRICNMARPQDGYRIVQHLQYIGWPAYRDTPPSKRSLLKVVRRLEKWQEQYDGREGRTVVHCLNGGGRSGTFCAICSVCEMIQQQNIIDVFHIVKTLRNNKSNMVETLEQYKFVYEVALEYLSSF</sequence>
<proteinExistence type="evidence at protein level"/>
<name>PTPRT_HUMAN</name>
<comment type="function">
    <text>May be involved in both signal transduction and cellular adhesion in the CNS.</text>
</comment>
<comment type="catalytic activity">
    <reaction evidence="8">
        <text>O-phospho-L-tyrosyl-[protein] + H2O = L-tyrosyl-[protein] + phosphate</text>
        <dbReference type="Rhea" id="RHEA:10684"/>
        <dbReference type="Rhea" id="RHEA-COMP:10136"/>
        <dbReference type="Rhea" id="RHEA-COMP:20101"/>
        <dbReference type="ChEBI" id="CHEBI:15377"/>
        <dbReference type="ChEBI" id="CHEBI:43474"/>
        <dbReference type="ChEBI" id="CHEBI:46858"/>
        <dbReference type="ChEBI" id="CHEBI:61978"/>
        <dbReference type="EC" id="3.1.3.48"/>
    </reaction>
</comment>
<comment type="interaction">
    <interactant intactId="EBI-728180">
        <id>O14522</id>
    </interactant>
    <interactant intactId="EBI-401755">
        <id>P62993</id>
        <label>GRB2</label>
    </interactant>
    <organismsDiffer>false</organismsDiffer>
    <experiments>2</experiments>
</comment>
<comment type="interaction">
    <interactant intactId="EBI-728180">
        <id>O14522</id>
    </interactant>
    <interactant intactId="EBI-728153">
        <id>Q16849</id>
        <label>PTPRN</label>
    </interactant>
    <organismsDiffer>false</organismsDiffer>
    <experiments>3</experiments>
</comment>
<comment type="interaction">
    <interactant intactId="EBI-728180">
        <id>O14522</id>
    </interactant>
    <interactant intactId="EBI-775037">
        <id>Q99K10</id>
        <label>Nlgn1</label>
    </interactant>
    <organismsDiffer>true</organismsDiffer>
    <experiments>2</experiments>
</comment>
<comment type="interaction">
    <interactant intactId="EBI-728180">
        <id>O14522</id>
    </interactant>
    <interactant intactId="EBI-775065">
        <id>Q69ZK9</id>
        <label>Nlgn2</label>
    </interactant>
    <organismsDiffer>true</organismsDiffer>
    <experiments>2</experiments>
</comment>
<comment type="interaction">
    <interactant intactId="EBI-728180">
        <id>O14522</id>
    </interactant>
    <interactant intactId="EBI-399696">
        <id>Q9CS84</id>
        <label>Nrxn1</label>
    </interactant>
    <organismsDiffer>true</organismsDiffer>
    <experiments>2</experiments>
</comment>
<comment type="interaction">
    <interactant intactId="EBI-728180">
        <id>O14522</id>
    </interactant>
    <interactant intactId="EBI-7281557">
        <id>Q6P9K9</id>
        <label>Nrxn3</label>
    </interactant>
    <organismsDiffer>true</organismsDiffer>
    <experiments>2</experiments>
</comment>
<comment type="subcellular location">
    <subcellularLocation>
        <location>Membrane</location>
        <topology>Single-pass type I membrane protein</topology>
    </subcellularLocation>
</comment>
<comment type="alternative products">
    <event type="alternative splicing"/>
    <isoform>
        <id>O14522-3</id>
        <name>3</name>
        <sequence type="displayed"/>
    </isoform>
    <isoform>
        <id>O14522-1</id>
        <name>1</name>
        <sequence type="described" ref="VSP_040385 VSP_040386"/>
    </isoform>
</comment>
<comment type="tissue specificity">
    <text evidence="10">Expressed in colon, lung, heart and testis, as well as in fetal and adult brain. Not detected in muscle and peripheral blood leukocytes.</text>
</comment>
<comment type="similarity">
    <text evidence="17">Belongs to the protein-tyrosine phosphatase family. Receptor class 2B subfamily.</text>
</comment>
<comment type="sequence caution" evidence="17">
    <conflict type="erroneous initiation">
        <sequence resource="EMBL-CDS" id="BAA22952"/>
    </conflict>
    <text>Extended N-terminus.</text>
</comment>
<protein>
    <recommendedName>
        <fullName>Receptor-type tyrosine-protein phosphatase T</fullName>
        <shortName>R-PTP-T</shortName>
        <ecNumber>3.1.3.48</ecNumber>
    </recommendedName>
    <alternativeName>
        <fullName>Receptor-type tyrosine-protein phosphatase rho</fullName>
        <shortName>RPTP-rho</shortName>
    </alternativeName>
</protein>
<evidence type="ECO:0000250" key="1"/>
<evidence type="ECO:0000250" key="2">
    <source>
        <dbReference type="UniProtKB" id="Q99M80"/>
    </source>
</evidence>
<evidence type="ECO:0000255" key="3"/>
<evidence type="ECO:0000255" key="4">
    <source>
        <dbReference type="PROSITE-ProRule" id="PRU00114"/>
    </source>
</evidence>
<evidence type="ECO:0000255" key="5">
    <source>
        <dbReference type="PROSITE-ProRule" id="PRU00128"/>
    </source>
</evidence>
<evidence type="ECO:0000255" key="6">
    <source>
        <dbReference type="PROSITE-ProRule" id="PRU00160"/>
    </source>
</evidence>
<evidence type="ECO:0000255" key="7">
    <source>
        <dbReference type="PROSITE-ProRule" id="PRU00316"/>
    </source>
</evidence>
<evidence type="ECO:0000255" key="8">
    <source>
        <dbReference type="PROSITE-ProRule" id="PRU10044"/>
    </source>
</evidence>
<evidence type="ECO:0000256" key="9">
    <source>
        <dbReference type="SAM" id="MobiDB-lite"/>
    </source>
</evidence>
<evidence type="ECO:0000269" key="10">
    <source>
    </source>
</evidence>
<evidence type="ECO:0000269" key="11">
    <source>
    </source>
</evidence>
<evidence type="ECO:0000269" key="12">
    <source>
    </source>
</evidence>
<evidence type="ECO:0000269" key="13">
    <source>
    </source>
</evidence>
<evidence type="ECO:0000269" key="14">
    <source>
    </source>
</evidence>
<evidence type="ECO:0000269" key="15">
    <source>
    </source>
</evidence>
<evidence type="ECO:0000303" key="16">
    <source>
    </source>
</evidence>
<evidence type="ECO:0000305" key="17"/>
<evidence type="ECO:0007829" key="18">
    <source>
        <dbReference type="PDB" id="2OOQ"/>
    </source>
</evidence>
<dbReference type="EC" id="3.1.3.48"/>
<dbReference type="EMBL" id="AF043644">
    <property type="protein sequence ID" value="AAD09421.2"/>
    <property type="molecule type" value="mRNA"/>
</dbReference>
<dbReference type="EMBL" id="AB006621">
    <property type="protein sequence ID" value="BAA22952.2"/>
    <property type="status" value="ALT_INIT"/>
    <property type="molecule type" value="mRNA"/>
</dbReference>
<dbReference type="EMBL" id="AL021395">
    <property type="status" value="NOT_ANNOTATED_CDS"/>
    <property type="molecule type" value="Genomic_DNA"/>
</dbReference>
<dbReference type="EMBL" id="AL022239">
    <property type="status" value="NOT_ANNOTATED_CDS"/>
    <property type="molecule type" value="Genomic_DNA"/>
</dbReference>
<dbReference type="EMBL" id="AL024473">
    <property type="status" value="NOT_ANNOTATED_CDS"/>
    <property type="molecule type" value="Genomic_DNA"/>
</dbReference>
<dbReference type="EMBL" id="AL031656">
    <property type="status" value="NOT_ANNOTATED_CDS"/>
    <property type="molecule type" value="Genomic_DNA"/>
</dbReference>
<dbReference type="EMBL" id="AL035459">
    <property type="status" value="NOT_ANNOTATED_CDS"/>
    <property type="molecule type" value="Genomic_DNA"/>
</dbReference>
<dbReference type="EMBL" id="AL049812">
    <property type="status" value="NOT_ANNOTATED_CDS"/>
    <property type="molecule type" value="Genomic_DNA"/>
</dbReference>
<dbReference type="EMBL" id="AL121763">
    <property type="status" value="NOT_ANNOTATED_CDS"/>
    <property type="molecule type" value="Genomic_DNA"/>
</dbReference>
<dbReference type="EMBL" id="AL136461">
    <property type="status" value="NOT_ANNOTATED_CDS"/>
    <property type="molecule type" value="Genomic_DNA"/>
</dbReference>
<dbReference type="EMBL" id="Z93942">
    <property type="status" value="NOT_ANNOTATED_CDS"/>
    <property type="molecule type" value="Genomic_DNA"/>
</dbReference>
<dbReference type="EMBL" id="AL031676">
    <property type="status" value="NOT_ANNOTATED_CDS"/>
    <property type="molecule type" value="Genomic_DNA"/>
</dbReference>
<dbReference type="EMBL" id="AL035666">
    <property type="status" value="NOT_ANNOTATED_CDS"/>
    <property type="molecule type" value="Genomic_DNA"/>
</dbReference>
<dbReference type="EMBL" id="AL109826">
    <property type="status" value="NOT_ANNOTATED_CDS"/>
    <property type="molecule type" value="Genomic_DNA"/>
</dbReference>
<dbReference type="EMBL" id="AL117374">
    <property type="status" value="NOT_ANNOTATED_CDS"/>
    <property type="molecule type" value="Genomic_DNA"/>
</dbReference>
<dbReference type="EMBL" id="AL359695">
    <property type="status" value="NOT_ANNOTATED_CDS"/>
    <property type="molecule type" value="Genomic_DNA"/>
</dbReference>
<dbReference type="EMBL" id="BC153300">
    <property type="protein sequence ID" value="AAI53301.1"/>
    <property type="molecule type" value="mRNA"/>
</dbReference>
<dbReference type="CCDS" id="CCDS42874.1">
    <molecule id="O14522-3"/>
</dbReference>
<dbReference type="RefSeq" id="NP_008981.4">
    <molecule id="O14522-3"/>
    <property type="nucleotide sequence ID" value="NM_007050.5"/>
</dbReference>
<dbReference type="RefSeq" id="NP_573400.3">
    <property type="nucleotide sequence ID" value="NM_133170.3"/>
</dbReference>
<dbReference type="PDB" id="2OOQ">
    <property type="method" value="X-ray"/>
    <property type="resolution" value="1.80 A"/>
    <property type="chains" value="A/B=868-1151"/>
</dbReference>
<dbReference type="PDBsum" id="2OOQ"/>
<dbReference type="SMR" id="O14522"/>
<dbReference type="BioGRID" id="116296">
    <property type="interactions" value="9"/>
</dbReference>
<dbReference type="DIP" id="DIP-33967N"/>
<dbReference type="FunCoup" id="O14522">
    <property type="interactions" value="124"/>
</dbReference>
<dbReference type="IntAct" id="O14522">
    <property type="interactions" value="22"/>
</dbReference>
<dbReference type="MINT" id="O14522"/>
<dbReference type="STRING" id="9606.ENSP00000362294"/>
<dbReference type="DEPOD" id="PTPRT"/>
<dbReference type="GlyCosmos" id="O14522">
    <property type="glycosylation" value="10 sites, No reported glycans"/>
</dbReference>
<dbReference type="GlyGen" id="O14522">
    <property type="glycosylation" value="11 sites"/>
</dbReference>
<dbReference type="iPTMnet" id="O14522"/>
<dbReference type="PhosphoSitePlus" id="O14522"/>
<dbReference type="BioMuta" id="PTPRT"/>
<dbReference type="jPOST" id="O14522"/>
<dbReference type="MassIVE" id="O14522"/>
<dbReference type="PaxDb" id="9606-ENSP00000362294"/>
<dbReference type="PeptideAtlas" id="O14522"/>
<dbReference type="ProteomicsDB" id="48065">
    <molecule id="O14522-3"/>
</dbReference>
<dbReference type="ProteomicsDB" id="48066">
    <molecule id="O14522-1"/>
</dbReference>
<dbReference type="Antibodypedia" id="2780">
    <property type="antibodies" value="112 antibodies from 32 providers"/>
</dbReference>
<dbReference type="DNASU" id="11122"/>
<dbReference type="Ensembl" id="ENST00000373187.6">
    <molecule id="O14522-3"/>
    <property type="protein sequence ID" value="ENSP00000362283.1"/>
    <property type="gene ID" value="ENSG00000196090.14"/>
</dbReference>
<dbReference type="Ensembl" id="ENST00000373193.7">
    <molecule id="O14522-1"/>
    <property type="protein sequence ID" value="ENSP00000362289.4"/>
    <property type="gene ID" value="ENSG00000196090.14"/>
</dbReference>
<dbReference type="GeneID" id="11122"/>
<dbReference type="KEGG" id="hsa:11122"/>
<dbReference type="MANE-Select" id="ENST00000373187.6">
    <property type="protein sequence ID" value="ENSP00000362283.1"/>
    <property type="RefSeq nucleotide sequence ID" value="NM_007050.6"/>
    <property type="RefSeq protein sequence ID" value="NP_008981.4"/>
</dbReference>
<dbReference type="UCSC" id="uc002xkg.4">
    <molecule id="O14522-3"/>
    <property type="organism name" value="human"/>
</dbReference>
<dbReference type="AGR" id="HGNC:9682"/>
<dbReference type="CTD" id="11122"/>
<dbReference type="DisGeNET" id="11122"/>
<dbReference type="GeneCards" id="PTPRT"/>
<dbReference type="HGNC" id="HGNC:9682">
    <property type="gene designation" value="PTPRT"/>
</dbReference>
<dbReference type="HPA" id="ENSG00000196090">
    <property type="expression patterns" value="Tissue enhanced (brain, fallopian tube, lymphoid tissue)"/>
</dbReference>
<dbReference type="MalaCards" id="PTPRT"/>
<dbReference type="MIM" id="608712">
    <property type="type" value="gene"/>
</dbReference>
<dbReference type="neXtProt" id="NX_O14522"/>
<dbReference type="OpenTargets" id="ENSG00000196090"/>
<dbReference type="PharmGKB" id="PA34027"/>
<dbReference type="VEuPathDB" id="HostDB:ENSG00000196090"/>
<dbReference type="eggNOG" id="KOG4228">
    <property type="taxonomic scope" value="Eukaryota"/>
</dbReference>
<dbReference type="GeneTree" id="ENSGT00940000155326"/>
<dbReference type="HOGENOM" id="CLU_001645_0_0_1"/>
<dbReference type="InParanoid" id="O14522"/>
<dbReference type="OrthoDB" id="10253954at2759"/>
<dbReference type="PAN-GO" id="O14522">
    <property type="GO annotations" value="2 GO annotations based on evolutionary models"/>
</dbReference>
<dbReference type="PhylomeDB" id="O14522"/>
<dbReference type="TreeFam" id="TF312900"/>
<dbReference type="BRENDA" id="3.1.3.48">
    <property type="organism ID" value="2681"/>
</dbReference>
<dbReference type="PathwayCommons" id="O14522"/>
<dbReference type="SignaLink" id="O14522"/>
<dbReference type="SIGNOR" id="O14522"/>
<dbReference type="BioGRID-ORCS" id="11122">
    <property type="hits" value="17 hits in 1162 CRISPR screens"/>
</dbReference>
<dbReference type="ChiTaRS" id="PTPRT">
    <property type="organism name" value="human"/>
</dbReference>
<dbReference type="EvolutionaryTrace" id="O14522"/>
<dbReference type="GeneWiki" id="PTPRT"/>
<dbReference type="GenomeRNAi" id="11122"/>
<dbReference type="Pharos" id="O14522">
    <property type="development level" value="Tbio"/>
</dbReference>
<dbReference type="PRO" id="PR:O14522"/>
<dbReference type="Proteomes" id="UP000005640">
    <property type="component" value="Chromosome 20"/>
</dbReference>
<dbReference type="RNAct" id="O14522">
    <property type="molecule type" value="protein"/>
</dbReference>
<dbReference type="Bgee" id="ENSG00000196090">
    <property type="expression patterns" value="Expressed in Brodmann (1909) area 10 and 95 other cell types or tissues"/>
</dbReference>
<dbReference type="ExpressionAtlas" id="O14522">
    <property type="expression patterns" value="baseline and differential"/>
</dbReference>
<dbReference type="GO" id="GO:0009986">
    <property type="term" value="C:cell surface"/>
    <property type="evidence" value="ECO:0000314"/>
    <property type="project" value="UniProtKB"/>
</dbReference>
<dbReference type="GO" id="GO:0016020">
    <property type="term" value="C:membrane"/>
    <property type="evidence" value="ECO:0000303"/>
    <property type="project" value="UniProtKB"/>
</dbReference>
<dbReference type="GO" id="GO:0005886">
    <property type="term" value="C:plasma membrane"/>
    <property type="evidence" value="ECO:0000314"/>
    <property type="project" value="UniProtKB"/>
</dbReference>
<dbReference type="GO" id="GO:0051393">
    <property type="term" value="F:alpha-actinin binding"/>
    <property type="evidence" value="ECO:0007669"/>
    <property type="project" value="Ensembl"/>
</dbReference>
<dbReference type="GO" id="GO:0045294">
    <property type="term" value="F:alpha-catenin binding"/>
    <property type="evidence" value="ECO:0000314"/>
    <property type="project" value="UniProtKB"/>
</dbReference>
<dbReference type="GO" id="GO:0008013">
    <property type="term" value="F:beta-catenin binding"/>
    <property type="evidence" value="ECO:0000353"/>
    <property type="project" value="UniProtKB"/>
</dbReference>
<dbReference type="GO" id="GO:0045296">
    <property type="term" value="F:cadherin binding"/>
    <property type="evidence" value="ECO:0000353"/>
    <property type="project" value="UniProtKB"/>
</dbReference>
<dbReference type="GO" id="GO:0070097">
    <property type="term" value="F:delta-catenin binding"/>
    <property type="evidence" value="ECO:0000353"/>
    <property type="project" value="UniProtKB"/>
</dbReference>
<dbReference type="GO" id="GO:0045295">
    <property type="term" value="F:gamma-catenin binding"/>
    <property type="evidence" value="ECO:0000314"/>
    <property type="project" value="UniProtKB"/>
</dbReference>
<dbReference type="GO" id="GO:0042803">
    <property type="term" value="F:protein homodimerization activity"/>
    <property type="evidence" value="ECO:0000353"/>
    <property type="project" value="ARUK-UCL"/>
</dbReference>
<dbReference type="GO" id="GO:0019903">
    <property type="term" value="F:protein phosphatase binding"/>
    <property type="evidence" value="ECO:0000353"/>
    <property type="project" value="ARUK-UCL"/>
</dbReference>
<dbReference type="GO" id="GO:0004725">
    <property type="term" value="F:protein tyrosine phosphatase activity"/>
    <property type="evidence" value="ECO:0000315"/>
    <property type="project" value="UniProtKB"/>
</dbReference>
<dbReference type="GO" id="GO:0097677">
    <property type="term" value="F:STAT family protein binding"/>
    <property type="evidence" value="ECO:0000353"/>
    <property type="project" value="ARUK-UCL"/>
</dbReference>
<dbReference type="GO" id="GO:0016790">
    <property type="term" value="F:thiolester hydrolase activity"/>
    <property type="evidence" value="ECO:0007669"/>
    <property type="project" value="Ensembl"/>
</dbReference>
<dbReference type="GO" id="GO:0005001">
    <property type="term" value="F:transmembrane receptor protein tyrosine phosphatase activity"/>
    <property type="evidence" value="ECO:0000314"/>
    <property type="project" value="ARUK-UCL"/>
</dbReference>
<dbReference type="GO" id="GO:0007155">
    <property type="term" value="P:cell adhesion"/>
    <property type="evidence" value="ECO:0000303"/>
    <property type="project" value="UniProtKB"/>
</dbReference>
<dbReference type="GO" id="GO:0007169">
    <property type="term" value="P:cell surface receptor protein tyrosine kinase signaling pathway"/>
    <property type="evidence" value="ECO:0000315"/>
    <property type="project" value="UniProtKB"/>
</dbReference>
<dbReference type="GO" id="GO:0071354">
    <property type="term" value="P:cellular response to interleukin-6"/>
    <property type="evidence" value="ECO:0000314"/>
    <property type="project" value="ARUK-UCL"/>
</dbReference>
<dbReference type="GO" id="GO:0007156">
    <property type="term" value="P:homophilic cell adhesion via plasma membrane adhesion molecules"/>
    <property type="evidence" value="ECO:0000314"/>
    <property type="project" value="UniProtKB"/>
</dbReference>
<dbReference type="GO" id="GO:0030336">
    <property type="term" value="P:negative regulation of cell migration"/>
    <property type="evidence" value="ECO:0000315"/>
    <property type="project" value="ARUK-UCL"/>
</dbReference>
<dbReference type="GO" id="GO:1904893">
    <property type="term" value="P:negative regulation of receptor signaling pathway via STAT"/>
    <property type="evidence" value="ECO:0000314"/>
    <property type="project" value="ARUK-UCL"/>
</dbReference>
<dbReference type="GO" id="GO:0031175">
    <property type="term" value="P:neuron projection development"/>
    <property type="evidence" value="ECO:0000318"/>
    <property type="project" value="GO_Central"/>
</dbReference>
<dbReference type="GO" id="GO:0035335">
    <property type="term" value="P:peptidyl-tyrosine dephosphorylation"/>
    <property type="evidence" value="ECO:0000314"/>
    <property type="project" value="ARUK-UCL"/>
</dbReference>
<dbReference type="GO" id="GO:0006470">
    <property type="term" value="P:protein dephosphorylation"/>
    <property type="evidence" value="ECO:0000314"/>
    <property type="project" value="UniProtKB"/>
</dbReference>
<dbReference type="GO" id="GO:0007165">
    <property type="term" value="P:signal transduction"/>
    <property type="evidence" value="ECO:0000318"/>
    <property type="project" value="GO_Central"/>
</dbReference>
<dbReference type="CDD" id="cd00063">
    <property type="entry name" value="FN3"/>
    <property type="match status" value="3"/>
</dbReference>
<dbReference type="CDD" id="cd06263">
    <property type="entry name" value="MAM"/>
    <property type="match status" value="1"/>
</dbReference>
<dbReference type="CDD" id="cd14630">
    <property type="entry name" value="R-PTPc-T-1"/>
    <property type="match status" value="1"/>
</dbReference>
<dbReference type="CDD" id="cd14634">
    <property type="entry name" value="R-PTPc-T-2"/>
    <property type="match status" value="1"/>
</dbReference>
<dbReference type="FunFam" id="3.90.190.10:FF:000003">
    <property type="entry name" value="receptor-type tyrosine-protein phosphatase kappa isoform X1"/>
    <property type="match status" value="1"/>
</dbReference>
<dbReference type="FunFam" id="3.90.190.10:FF:000005">
    <property type="entry name" value="receptor-type tyrosine-protein phosphatase kappa isoform X1"/>
    <property type="match status" value="1"/>
</dbReference>
<dbReference type="FunFam" id="2.60.40.10:FF:000019">
    <property type="entry name" value="receptor-type tyrosine-protein phosphatase kappa isoform X2"/>
    <property type="match status" value="1"/>
</dbReference>
<dbReference type="FunFam" id="2.60.120.200:FF:000006">
    <property type="entry name" value="receptor-type tyrosine-protein phosphatase T isoform X1"/>
    <property type="match status" value="1"/>
</dbReference>
<dbReference type="FunFam" id="2.60.40.10:FF:000152">
    <property type="entry name" value="receptor-type tyrosine-protein phosphatase T isoform X1"/>
    <property type="match status" value="1"/>
</dbReference>
<dbReference type="FunFam" id="2.60.40.10:FF:000009">
    <property type="entry name" value="receptor-type tyrosine-protein phosphatase U isoform X1"/>
    <property type="match status" value="1"/>
</dbReference>
<dbReference type="FunFam" id="2.60.40.10:FF:000025">
    <property type="entry name" value="receptor-type tyrosine-protein phosphatase U isoform X2"/>
    <property type="match status" value="1"/>
</dbReference>
<dbReference type="Gene3D" id="2.60.120.200">
    <property type="match status" value="1"/>
</dbReference>
<dbReference type="Gene3D" id="2.60.40.10">
    <property type="entry name" value="Immunoglobulins"/>
    <property type="match status" value="4"/>
</dbReference>
<dbReference type="Gene3D" id="3.90.190.10">
    <property type="entry name" value="Protein tyrosine phosphatase superfamily"/>
    <property type="match status" value="2"/>
</dbReference>
<dbReference type="InterPro" id="IPR013320">
    <property type="entry name" value="ConA-like_dom_sf"/>
</dbReference>
<dbReference type="InterPro" id="IPR003961">
    <property type="entry name" value="FN3_dom"/>
</dbReference>
<dbReference type="InterPro" id="IPR036116">
    <property type="entry name" value="FN3_sf"/>
</dbReference>
<dbReference type="InterPro" id="IPR007110">
    <property type="entry name" value="Ig-like_dom"/>
</dbReference>
<dbReference type="InterPro" id="IPR036179">
    <property type="entry name" value="Ig-like_dom_sf"/>
</dbReference>
<dbReference type="InterPro" id="IPR013783">
    <property type="entry name" value="Ig-like_fold"/>
</dbReference>
<dbReference type="InterPro" id="IPR000998">
    <property type="entry name" value="MAM_dom"/>
</dbReference>
<dbReference type="InterPro" id="IPR029021">
    <property type="entry name" value="Prot-tyrosine_phosphatase-like"/>
</dbReference>
<dbReference type="InterPro" id="IPR000242">
    <property type="entry name" value="PTP_cat"/>
</dbReference>
<dbReference type="InterPro" id="IPR051622">
    <property type="entry name" value="R-tyr_protein_phosphatases"/>
</dbReference>
<dbReference type="InterPro" id="IPR016130">
    <property type="entry name" value="Tyr_Pase_AS"/>
</dbReference>
<dbReference type="InterPro" id="IPR003595">
    <property type="entry name" value="Tyr_Pase_cat"/>
</dbReference>
<dbReference type="InterPro" id="IPR000387">
    <property type="entry name" value="Tyr_Pase_dom"/>
</dbReference>
<dbReference type="PANTHER" id="PTHR24051:SF12">
    <property type="entry name" value="PROTEIN-TYROSINE-PHOSPHATASE"/>
    <property type="match status" value="1"/>
</dbReference>
<dbReference type="PANTHER" id="PTHR24051">
    <property type="entry name" value="SUSHI DOMAIN-CONTAINING PROTEIN 1"/>
    <property type="match status" value="1"/>
</dbReference>
<dbReference type="Pfam" id="PF00041">
    <property type="entry name" value="fn3"/>
    <property type="match status" value="1"/>
</dbReference>
<dbReference type="Pfam" id="PF23144">
    <property type="entry name" value="Fn3_PTPRU"/>
    <property type="match status" value="1"/>
</dbReference>
<dbReference type="Pfam" id="PF00629">
    <property type="entry name" value="MAM"/>
    <property type="match status" value="1"/>
</dbReference>
<dbReference type="Pfam" id="PF00102">
    <property type="entry name" value="Y_phosphatase"/>
    <property type="match status" value="2"/>
</dbReference>
<dbReference type="PRINTS" id="PR00020">
    <property type="entry name" value="MAMDOMAIN"/>
</dbReference>
<dbReference type="PRINTS" id="PR00700">
    <property type="entry name" value="PRTYPHPHTASE"/>
</dbReference>
<dbReference type="SMART" id="SM00060">
    <property type="entry name" value="FN3"/>
    <property type="match status" value="3"/>
</dbReference>
<dbReference type="SMART" id="SM00137">
    <property type="entry name" value="MAM"/>
    <property type="match status" value="1"/>
</dbReference>
<dbReference type="SMART" id="SM00194">
    <property type="entry name" value="PTPc"/>
    <property type="match status" value="2"/>
</dbReference>
<dbReference type="SMART" id="SM00404">
    <property type="entry name" value="PTPc_motif"/>
    <property type="match status" value="2"/>
</dbReference>
<dbReference type="SUPFAM" id="SSF52799">
    <property type="entry name" value="(Phosphotyrosine protein) phosphatases II"/>
    <property type="match status" value="2"/>
</dbReference>
<dbReference type="SUPFAM" id="SSF49899">
    <property type="entry name" value="Concanavalin A-like lectins/glucanases"/>
    <property type="match status" value="1"/>
</dbReference>
<dbReference type="SUPFAM" id="SSF49265">
    <property type="entry name" value="Fibronectin type III"/>
    <property type="match status" value="2"/>
</dbReference>
<dbReference type="SUPFAM" id="SSF48726">
    <property type="entry name" value="Immunoglobulin"/>
    <property type="match status" value="1"/>
</dbReference>
<dbReference type="PROSITE" id="PS50853">
    <property type="entry name" value="FN3"/>
    <property type="match status" value="3"/>
</dbReference>
<dbReference type="PROSITE" id="PS50835">
    <property type="entry name" value="IG_LIKE"/>
    <property type="match status" value="1"/>
</dbReference>
<dbReference type="PROSITE" id="PS00740">
    <property type="entry name" value="MAM_1"/>
    <property type="match status" value="1"/>
</dbReference>
<dbReference type="PROSITE" id="PS50060">
    <property type="entry name" value="MAM_2"/>
    <property type="match status" value="1"/>
</dbReference>
<dbReference type="PROSITE" id="PS00383">
    <property type="entry name" value="TYR_PHOSPHATASE_1"/>
    <property type="match status" value="2"/>
</dbReference>
<dbReference type="PROSITE" id="PS50056">
    <property type="entry name" value="TYR_PHOSPHATASE_2"/>
    <property type="match status" value="2"/>
</dbReference>
<dbReference type="PROSITE" id="PS50055">
    <property type="entry name" value="TYR_PHOSPHATASE_PTP"/>
    <property type="match status" value="2"/>
</dbReference>
<keyword id="KW-0002">3D-structure</keyword>
<keyword id="KW-0025">Alternative splicing</keyword>
<keyword id="KW-1015">Disulfide bond</keyword>
<keyword id="KW-0325">Glycoprotein</keyword>
<keyword id="KW-0378">Hydrolase</keyword>
<keyword id="KW-0393">Immunoglobulin domain</keyword>
<keyword id="KW-0472">Membrane</keyword>
<keyword id="KW-0597">Phosphoprotein</keyword>
<keyword id="KW-0904">Protein phosphatase</keyword>
<keyword id="KW-1267">Proteomics identification</keyword>
<keyword id="KW-0675">Receptor</keyword>
<keyword id="KW-1185">Reference proteome</keyword>
<keyword id="KW-0677">Repeat</keyword>
<keyword id="KW-0732">Signal</keyword>
<keyword id="KW-0812">Transmembrane</keyword>
<keyword id="KW-1133">Transmembrane helix</keyword>
<feature type="signal peptide" evidence="3">
    <location>
        <begin position="1"/>
        <end position="25"/>
    </location>
</feature>
<feature type="chain" id="PRO_0000025463" description="Receptor-type tyrosine-protein phosphatase T">
    <location>
        <begin position="26"/>
        <end position="1441"/>
    </location>
</feature>
<feature type="topological domain" description="Extracellular" evidence="3">
    <location>
        <begin position="26"/>
        <end position="747"/>
    </location>
</feature>
<feature type="transmembrane region" description="Helical" evidence="3">
    <location>
        <begin position="748"/>
        <end position="768"/>
    </location>
</feature>
<feature type="topological domain" description="Cytoplasmic" evidence="3">
    <location>
        <begin position="769"/>
        <end position="1441"/>
    </location>
</feature>
<feature type="domain" description="MAM" evidence="5">
    <location>
        <begin position="30"/>
        <end position="191"/>
    </location>
</feature>
<feature type="domain" description="Ig-like C2-type">
    <location>
        <begin position="193"/>
        <end position="284"/>
    </location>
</feature>
<feature type="domain" description="Fibronectin type-III 1" evidence="7">
    <location>
        <begin position="291"/>
        <end position="384"/>
    </location>
</feature>
<feature type="domain" description="Fibronectin type-III 2" evidence="7">
    <location>
        <begin position="389"/>
        <end position="483"/>
    </location>
</feature>
<feature type="domain" description="Fibronectin type-III 3" evidence="7">
    <location>
        <begin position="484"/>
        <end position="590"/>
    </location>
</feature>
<feature type="domain" description="Fibronectin type-III 4" evidence="7">
    <location>
        <begin position="591"/>
        <end position="726"/>
    </location>
</feature>
<feature type="domain" description="Tyrosine-protein phosphatase 1" evidence="6">
    <location>
        <begin position="889"/>
        <end position="1143"/>
    </location>
</feature>
<feature type="domain" description="Tyrosine-protein phosphatase 2" evidence="6">
    <location>
        <begin position="1175"/>
        <end position="1437"/>
    </location>
</feature>
<feature type="region of interest" description="Disordered" evidence="9">
    <location>
        <begin position="790"/>
        <end position="839"/>
    </location>
</feature>
<feature type="compositionally biased region" description="Polar residues" evidence="9">
    <location>
        <begin position="809"/>
        <end position="828"/>
    </location>
</feature>
<feature type="active site" description="Phosphocysteine intermediate" evidence="1">
    <location>
        <position position="1084"/>
    </location>
</feature>
<feature type="active site" description="Phosphocysteine intermediate" evidence="1">
    <location>
        <position position="1378"/>
    </location>
</feature>
<feature type="binding site" evidence="1">
    <location>
        <position position="1052"/>
    </location>
    <ligand>
        <name>substrate</name>
    </ligand>
</feature>
<feature type="binding site" evidence="1">
    <location>
        <begin position="1084"/>
        <end position="1090"/>
    </location>
    <ligand>
        <name>substrate</name>
    </ligand>
</feature>
<feature type="binding site" evidence="1">
    <location>
        <position position="1128"/>
    </location>
    <ligand>
        <name>substrate</name>
    </ligand>
</feature>
<feature type="modified residue" description="Phosphoserine" evidence="2">
    <location>
        <position position="1208"/>
    </location>
</feature>
<feature type="glycosylation site" description="N-linked (GlcNAc...) asparagine" evidence="3">
    <location>
        <position position="78"/>
    </location>
</feature>
<feature type="glycosylation site" description="N-linked (GlcNAc...) asparagine" evidence="3">
    <location>
        <position position="98"/>
    </location>
</feature>
<feature type="glycosylation site" description="N-linked (GlcNAc...) asparagine" evidence="3">
    <location>
        <position position="137"/>
    </location>
</feature>
<feature type="glycosylation site" description="N-linked (GlcNAc...) asparagine" evidence="3">
    <location>
        <position position="208"/>
    </location>
</feature>
<feature type="glycosylation site" description="N-linked (GlcNAc...) asparagine" evidence="3">
    <location>
        <position position="421"/>
    </location>
</feature>
<feature type="glycosylation site" description="N-linked (GlcNAc...) asparagine" evidence="3">
    <location>
        <position position="510"/>
    </location>
</feature>
<feature type="glycosylation site" description="N-linked (GlcNAc...) asparagine" evidence="3">
    <location>
        <position position="547"/>
    </location>
</feature>
<feature type="glycosylation site" description="N-linked (GlcNAc...) asparagine" evidence="3">
    <location>
        <position position="601"/>
    </location>
</feature>
<feature type="glycosylation site" description="N-linked (GlcNAc...) asparagine" evidence="3">
    <location>
        <position position="654"/>
    </location>
</feature>
<feature type="glycosylation site" description="N-linked (GlcNAc...) asparagine" evidence="3">
    <location>
        <position position="684"/>
    </location>
</feature>
<feature type="disulfide bond" evidence="4">
    <location>
        <begin position="213"/>
        <end position="267"/>
    </location>
</feature>
<feature type="splice variant" id="VSP_040385" description="In isoform 1." evidence="16">
    <original>K</original>
    <variation>KAPMGSAQVTPGTPLCLLTT</variation>
    <location>
        <position position="725"/>
    </location>
</feature>
<feature type="splice variant" id="VSP_040386" description="In isoform 1." evidence="16">
    <original>L</original>
    <variation>LSQR</variation>
    <location>
        <position position="781"/>
    </location>
</feature>
<feature type="sequence variant" id="VAR_028795" description="In dbSNP:rs2867655." evidence="11 14 15">
    <original>A</original>
    <variation>P</variation>
    <location>
        <position position="29"/>
    </location>
</feature>
<feature type="sequence variant" id="VAR_020746" description="In a colorectal cancer; dbSNP:rs2145551304." evidence="10">
    <original>F</original>
    <variation>S</variation>
    <location>
        <position position="74"/>
    </location>
</feature>
<feature type="sequence variant" id="VAR_028796" description="In dbSNP:rs17811401.">
    <original>M</original>
    <variation>V</variation>
    <location>
        <position position="76"/>
    </location>
</feature>
<feature type="sequence variant" id="VAR_020747" description="In some colorectal cancers." evidence="10">
    <original>A</original>
    <variation>T</variation>
    <location>
        <position position="209"/>
    </location>
</feature>
<feature type="sequence variant" id="VAR_020748" description="In a gastric cancer." evidence="10">
    <original>K</original>
    <variation>T</variation>
    <location>
        <position position="218"/>
    </location>
</feature>
<feature type="sequence variant" id="VAR_020749" description="In a colorectal cancer." evidence="10">
    <original>F</original>
    <variation>S</variation>
    <location>
        <position position="248"/>
    </location>
</feature>
<feature type="sequence variant" id="VAR_020750" description="In a colorectal cancer." evidence="10">
    <original>Y</original>
    <variation>H</variation>
    <location>
        <position position="280"/>
    </location>
</feature>
<feature type="sequence variant" id="VAR_020751" description="In a colorectal cancer." evidence="10">
    <original>I</original>
    <variation>V</variation>
    <location>
        <position position="395"/>
    </location>
</feature>
<feature type="sequence variant" id="VAR_020752" description="In a colorectal cancer." evidence="10">
    <original>Y</original>
    <variation>F</variation>
    <location>
        <position position="412"/>
    </location>
</feature>
<feature type="sequence variant" id="VAR_020753" description="In a gastric cancer; dbSNP:rs1371429276." evidence="10">
    <original>R</original>
    <variation>C</variation>
    <location>
        <position position="453"/>
    </location>
</feature>
<feature type="sequence variant" id="VAR_020754" description="In a colorectal cancer; dbSNP:rs749647294." evidence="10">
    <original>N</original>
    <variation>K</variation>
    <location>
        <position position="510"/>
    </location>
</feature>
<feature type="sequence variant" id="VAR_020755" description="In a colorectal cancer; dbSNP:rs1217327426." evidence="10">
    <original>T</original>
    <variation>M</variation>
    <location>
        <position position="605"/>
    </location>
</feature>
<feature type="sequence variant" id="VAR_020756" description="In a colorectal cancer." evidence="10">
    <original>V</original>
    <variation>G</variation>
    <location>
        <position position="648"/>
    </location>
</feature>
<feature type="sequence variant" id="VAR_020757" description="In a colorectal cancer." evidence="10">
    <original>A</original>
    <variation>T</variation>
    <location>
        <position position="707"/>
    </location>
</feature>
<feature type="sequence variant" id="VAR_020758" description="In a colorectal cancer." evidence="10">
    <original>A</original>
    <variation>V</variation>
    <location>
        <position position="707"/>
    </location>
</feature>
<feature type="sequence variant" id="VAR_020759" description="In a colorectal cancer." evidence="10">
    <original>L</original>
    <variation>P</variation>
    <location>
        <position position="708"/>
    </location>
</feature>
<feature type="sequence variant" id="VAR_020760" description="In a lung cancer." evidence="10">
    <original>R</original>
    <variation>I</variation>
    <location>
        <position position="771"/>
    </location>
</feature>
<feature type="sequence variant" id="VAR_020761" description="In a colorectal cancer." evidence="10">
    <original>D</original>
    <variation>G</variation>
    <location>
        <position position="905"/>
    </location>
</feature>
<feature type="sequence variant" id="VAR_020762" description="In a colorectal cancer; reduced phosphatase activity." evidence="10">
    <original>Q</original>
    <variation>K</variation>
    <location>
        <position position="965"/>
    </location>
</feature>
<feature type="sequence variant" id="VAR_020763" description="In a colorectal cancer." evidence="10">
    <original>A</original>
    <variation>P</variation>
    <location>
        <position position="1096"/>
    </location>
</feature>
<feature type="sequence variant" id="VAR_020764" description="In a colorectal cancer; reduced phosphatase activity." evidence="10">
    <original>N</original>
    <variation>I</variation>
    <location>
        <position position="1106"/>
    </location>
</feature>
<feature type="sequence variant" id="VAR_020765" description="In a colorectal cancer; reduced phosphatase activity; dbSNP:rs370873414." evidence="10">
    <original>R</original>
    <variation>W</variation>
    <location>
        <position position="1190"/>
    </location>
</feature>
<feature type="sequence variant" id="VAR_054144" description="In an acute myeloid leukemia sample; somatic mutation." evidence="12">
    <original>P</original>
    <variation>L</variation>
    <location>
        <position position="1213"/>
    </location>
</feature>
<feature type="sequence variant" id="VAR_020766" description="In a colorectal cancer." evidence="10">
    <original>M</original>
    <variation>L</variation>
    <location>
        <position position="1237"/>
    </location>
</feature>
<feature type="sequence variant" id="VAR_020767" description="In a colorectal cancer; dbSNP:rs761148007." evidence="10">
    <original>V</original>
    <variation>M</variation>
    <location>
        <position position="1247"/>
    </location>
</feature>
<feature type="sequence variant" id="VAR_020768" description="In a lung cancer; reduced phosphatase activity." evidence="10">
    <original>R</original>
    <variation>L</variation>
    <location>
        <position position="1324"/>
    </location>
</feature>
<feature type="sequence variant" id="VAR_020769" description="In a colorectal cancer; dbSNP:rs1568910321." evidence="10">
    <original>Y</original>
    <variation>F</variation>
    <location>
        <position position="1329"/>
    </location>
</feature>
<feature type="sequence variant" id="VAR_020770" description="Found in a patient with severe intellectual disability, behavioral problems, microcephaly, congenital cardiac defect and herniation of the abdominal diaphragm; uncertain significance; reduced phosphatase activity; dbSNP:rs199947379." evidence="10 13">
    <original>T</original>
    <variation>M</variation>
    <location>
        <position position="1346"/>
    </location>
</feature>
<feature type="sequence conflict" description="In Ref. 1; AAD09421." evidence="17" ref="1">
    <original>W</original>
    <variation>T</variation>
    <location>
        <position position="60"/>
    </location>
</feature>
<feature type="sequence conflict" description="In Ref. 1; AAD09421." evidence="17" ref="1">
    <original>P</original>
    <variation>A</variation>
    <location>
        <position position="375"/>
    </location>
</feature>
<feature type="sequence conflict" description="In Ref. 1; AAD09421." evidence="17" ref="1">
    <original>P</original>
    <variation>L</variation>
    <location>
        <position position="867"/>
    </location>
</feature>
<feature type="helix" evidence="18">
    <location>
        <begin position="871"/>
        <end position="873"/>
    </location>
</feature>
<feature type="helix" evidence="18">
    <location>
        <begin position="874"/>
        <end position="882"/>
    </location>
</feature>
<feature type="helix" evidence="18">
    <location>
        <begin position="889"/>
        <end position="895"/>
    </location>
</feature>
<feature type="turn" evidence="18">
    <location>
        <begin position="905"/>
        <end position="908"/>
    </location>
</feature>
<feature type="helix" evidence="18">
    <location>
        <begin position="910"/>
        <end position="915"/>
    </location>
</feature>
<feature type="helix" evidence="18">
    <location>
        <begin position="925"/>
        <end position="927"/>
    </location>
</feature>
<feature type="helix" evidence="18">
    <location>
        <begin position="938"/>
        <end position="941"/>
    </location>
</feature>
<feature type="strand" evidence="18">
    <location>
        <begin position="944"/>
        <end position="948"/>
    </location>
</feature>
<feature type="strand" evidence="18">
    <location>
        <begin position="951"/>
        <end position="953"/>
    </location>
</feature>
<feature type="strand" evidence="18">
    <location>
        <begin position="957"/>
        <end position="960"/>
    </location>
</feature>
<feature type="turn" evidence="18">
    <location>
        <begin position="965"/>
        <end position="967"/>
    </location>
</feature>
<feature type="helix" evidence="18">
    <location>
        <begin position="968"/>
        <end position="978"/>
    </location>
</feature>
<feature type="strand" evidence="18">
    <location>
        <begin position="982"/>
        <end position="985"/>
    </location>
</feature>
<feature type="strand" evidence="18">
    <location>
        <begin position="989"/>
        <end position="991"/>
    </location>
</feature>
<feature type="strand" evidence="18">
    <location>
        <begin position="1003"/>
        <end position="1009"/>
    </location>
</feature>
<feature type="strand" evidence="18">
    <location>
        <begin position="1011"/>
        <end position="1020"/>
    </location>
</feature>
<feature type="strand" evidence="18">
    <location>
        <begin position="1022"/>
        <end position="1033"/>
    </location>
</feature>
<feature type="strand" evidence="18">
    <location>
        <begin position="1040"/>
        <end position="1047"/>
    </location>
</feature>
<feature type="helix" evidence="18">
    <location>
        <begin position="1060"/>
        <end position="1072"/>
    </location>
</feature>
<feature type="strand" evidence="18">
    <location>
        <begin position="1080"/>
        <end position="1083"/>
    </location>
</feature>
<feature type="strand" evidence="18">
    <location>
        <begin position="1085"/>
        <end position="1088"/>
    </location>
</feature>
<feature type="helix" evidence="18">
    <location>
        <begin position="1089"/>
        <end position="1107"/>
    </location>
</feature>
<feature type="strand" evidence="18">
    <location>
        <begin position="1108"/>
        <end position="1110"/>
    </location>
</feature>
<feature type="helix" evidence="18">
    <location>
        <begin position="1112"/>
        <end position="1122"/>
    </location>
</feature>
<feature type="helix" evidence="18">
    <location>
        <begin position="1130"/>
        <end position="1145"/>
    </location>
</feature>
<reference key="1">
    <citation type="journal article" date="1998" name="Brain Res. Mol. Brain Res.">
        <title>Identification and characterization of RPTP rho, a novel RPTP mu/kappa-like receptor protein tyrosine phosphatase whose expression is restricted to the central nervous system.</title>
        <authorList>
            <person name="McAndrew P.E."/>
            <person name="Frostholm A."/>
            <person name="White R.A."/>
            <person name="Rotter A."/>
            <person name="Burghes A.H.M."/>
        </authorList>
    </citation>
    <scope>NUCLEOTIDE SEQUENCE [MRNA] (ISOFORM 1)</scope>
    <scope>CHARACTERIZATION</scope>
    <scope>VARIANT PRO-29</scope>
</reference>
<reference key="2">
    <citation type="journal article" date="1997" name="DNA Res.">
        <title>Construction and characterization of human brain cDNA libraries suitable for analysis of cDNA clones encoding relatively large proteins.</title>
        <authorList>
            <person name="Ohara O."/>
            <person name="Nagase T."/>
            <person name="Ishikawa K."/>
            <person name="Nakajima D."/>
            <person name="Ohira M."/>
            <person name="Seki N."/>
            <person name="Nomura N."/>
        </authorList>
    </citation>
    <scope>NUCLEOTIDE SEQUENCE [LARGE SCALE MRNA] (ISOFORM 3)</scope>
    <scope>VARIANT PRO-29</scope>
    <source>
        <tissue>Brain</tissue>
    </source>
</reference>
<reference key="3">
    <citation type="journal article" date="2001" name="Nature">
        <title>The DNA sequence and comparative analysis of human chromosome 20.</title>
        <authorList>
            <person name="Deloukas P."/>
            <person name="Matthews L.H."/>
            <person name="Ashurst J.L."/>
            <person name="Burton J."/>
            <person name="Gilbert J.G.R."/>
            <person name="Jones M."/>
            <person name="Stavrides G."/>
            <person name="Almeida J.P."/>
            <person name="Babbage A.K."/>
            <person name="Bagguley C.L."/>
            <person name="Bailey J."/>
            <person name="Barlow K.F."/>
            <person name="Bates K.N."/>
            <person name="Beard L.M."/>
            <person name="Beare D.M."/>
            <person name="Beasley O.P."/>
            <person name="Bird C.P."/>
            <person name="Blakey S.E."/>
            <person name="Bridgeman A.M."/>
            <person name="Brown A.J."/>
            <person name="Buck D."/>
            <person name="Burrill W.D."/>
            <person name="Butler A.P."/>
            <person name="Carder C."/>
            <person name="Carter N.P."/>
            <person name="Chapman J.C."/>
            <person name="Clamp M."/>
            <person name="Clark G."/>
            <person name="Clark L.N."/>
            <person name="Clark S.Y."/>
            <person name="Clee C.M."/>
            <person name="Clegg S."/>
            <person name="Cobley V.E."/>
            <person name="Collier R.E."/>
            <person name="Connor R.E."/>
            <person name="Corby N.R."/>
            <person name="Coulson A."/>
            <person name="Coville G.J."/>
            <person name="Deadman R."/>
            <person name="Dhami P.D."/>
            <person name="Dunn M."/>
            <person name="Ellington A.G."/>
            <person name="Frankland J.A."/>
            <person name="Fraser A."/>
            <person name="French L."/>
            <person name="Garner P."/>
            <person name="Grafham D.V."/>
            <person name="Griffiths C."/>
            <person name="Griffiths M.N.D."/>
            <person name="Gwilliam R."/>
            <person name="Hall R.E."/>
            <person name="Hammond S."/>
            <person name="Harley J.L."/>
            <person name="Heath P.D."/>
            <person name="Ho S."/>
            <person name="Holden J.L."/>
            <person name="Howden P.J."/>
            <person name="Huckle E."/>
            <person name="Hunt A.R."/>
            <person name="Hunt S.E."/>
            <person name="Jekosch K."/>
            <person name="Johnson C.M."/>
            <person name="Johnson D."/>
            <person name="Kay M.P."/>
            <person name="Kimberley A.M."/>
            <person name="King A."/>
            <person name="Knights A."/>
            <person name="Laird G.K."/>
            <person name="Lawlor S."/>
            <person name="Lehvaeslaiho M.H."/>
            <person name="Leversha M.A."/>
            <person name="Lloyd C."/>
            <person name="Lloyd D.M."/>
            <person name="Lovell J.D."/>
            <person name="Marsh V.L."/>
            <person name="Martin S.L."/>
            <person name="McConnachie L.J."/>
            <person name="McLay K."/>
            <person name="McMurray A.A."/>
            <person name="Milne S.A."/>
            <person name="Mistry D."/>
            <person name="Moore M.J.F."/>
            <person name="Mullikin J.C."/>
            <person name="Nickerson T."/>
            <person name="Oliver K."/>
            <person name="Parker A."/>
            <person name="Patel R."/>
            <person name="Pearce T.A.V."/>
            <person name="Peck A.I."/>
            <person name="Phillimore B.J.C.T."/>
            <person name="Prathalingam S.R."/>
            <person name="Plumb R.W."/>
            <person name="Ramsay H."/>
            <person name="Rice C.M."/>
            <person name="Ross M.T."/>
            <person name="Scott C.E."/>
            <person name="Sehra H.K."/>
            <person name="Shownkeen R."/>
            <person name="Sims S."/>
            <person name="Skuce C.D."/>
            <person name="Smith M.L."/>
            <person name="Soderlund C."/>
            <person name="Steward C.A."/>
            <person name="Sulston J.E."/>
            <person name="Swann R.M."/>
            <person name="Sycamore N."/>
            <person name="Taylor R."/>
            <person name="Tee L."/>
            <person name="Thomas D.W."/>
            <person name="Thorpe A."/>
            <person name="Tracey A."/>
            <person name="Tromans A.C."/>
            <person name="Vaudin M."/>
            <person name="Wall M."/>
            <person name="Wallis J.M."/>
            <person name="Whitehead S.L."/>
            <person name="Whittaker P."/>
            <person name="Willey D.L."/>
            <person name="Williams L."/>
            <person name="Williams S.A."/>
            <person name="Wilming L."/>
            <person name="Wray P.W."/>
            <person name="Hubbard T."/>
            <person name="Durbin R.M."/>
            <person name="Bentley D.R."/>
            <person name="Beck S."/>
            <person name="Rogers J."/>
        </authorList>
    </citation>
    <scope>NUCLEOTIDE SEQUENCE [LARGE SCALE GENOMIC DNA]</scope>
</reference>
<reference key="4">
    <citation type="journal article" date="2004" name="Genome Res.">
        <title>The status, quality, and expansion of the NIH full-length cDNA project: the Mammalian Gene Collection (MGC).</title>
        <authorList>
            <consortium name="The MGC Project Team"/>
        </authorList>
    </citation>
    <scope>NUCLEOTIDE SEQUENCE [LARGE SCALE MRNA] (ISOFORM 3)</scope>
    <scope>VARIANT PRO-29</scope>
</reference>
<reference key="5">
    <citation type="journal article" date="2001" name="BMC Genomics">
        <title>Genomic organization and alternative splicing of the human and mouse RPTPrho genes.</title>
        <authorList>
            <person name="Besco J.A."/>
            <person name="Frostholm A."/>
            <person name="Popesco M.C."/>
            <person name="Burghes A.H.M."/>
            <person name="Rotter A."/>
        </authorList>
    </citation>
    <scope>ALTERNATIVE SPLICING</scope>
</reference>
<reference key="6">
    <citation type="journal article" date="2001" name="BMC Genomics">
        <authorList>
            <person name="Besco J.A."/>
            <person name="Frostholm A."/>
            <person name="Popesco M.C."/>
            <person name="Burghes A.H.M."/>
            <person name="Rotter A."/>
        </authorList>
    </citation>
    <scope>ERRATUM OF PUBMED:11423001</scope>
</reference>
<reference key="7">
    <citation type="journal article" date="2009" name="Cell">
        <title>Large-scale structural analysis of the classical human protein tyrosine phosphatome.</title>
        <authorList>
            <person name="Barr A.J."/>
            <person name="Ugochukwu E."/>
            <person name="Lee W.H."/>
            <person name="King O.N.F."/>
            <person name="Filippakopoulos P."/>
            <person name="Alfano I."/>
            <person name="Savitsky P."/>
            <person name="Burgess-Brown N.A."/>
            <person name="Mueller S."/>
            <person name="Knapp S."/>
        </authorList>
    </citation>
    <scope>X-RAY CRYSTALLOGRAPHY (1.8 ANGSTROMS) OF 868-1151</scope>
</reference>
<reference key="8">
    <citation type="journal article" date="2004" name="Science">
        <title>Mutational analysis of the tyrosine phosphatome in colorectal cancers.</title>
        <authorList>
            <person name="Wang Z."/>
            <person name="Shen D."/>
            <person name="Parsons D.W."/>
            <person name="Bardelli A."/>
            <person name="Sager J."/>
            <person name="Szabo S."/>
            <person name="Ptak J."/>
            <person name="Silliman N."/>
            <person name="Peters B.A."/>
            <person name="van der Heijden M.S."/>
            <person name="Parmigiani G."/>
            <person name="Yan H."/>
            <person name="Wang T.-L."/>
            <person name="Riggins G."/>
            <person name="Powell S.M."/>
            <person name="Willson J.K.V."/>
            <person name="Markowitz S."/>
            <person name="Kinzler K.W."/>
            <person name="Vogelstein B."/>
            <person name="Velculescu V.E."/>
        </authorList>
    </citation>
    <scope>VARIANTS SER-74; THR-209; THR-218; SER-248; HIS-280; VAL-395; PHE-412; CYS-453; LYS-510; MET-605; GLY-648; THR-707; VAL-707; PRO-708; ILE-771; GLY-905; LYS-965; PRO-1096; ILE-1106; TRP-1190; LEU-1237; MET-1247; LEU-1324; PHE-1329 AND MET-1346</scope>
    <scope>TISSUE SPECIFICITY</scope>
</reference>
<reference key="9">
    <citation type="journal article" date="2008" name="Nature">
        <title>DNA sequencing of a cytogenetically normal acute myeloid leukaemia genome.</title>
        <authorList>
            <person name="Ley T.J."/>
            <person name="Mardis E.R."/>
            <person name="Ding L."/>
            <person name="Fulton B."/>
            <person name="McLellan M.D."/>
            <person name="Chen K."/>
            <person name="Dooling D."/>
            <person name="Dunford-Shore B.H."/>
            <person name="McGrath S."/>
            <person name="Hickenbotham M."/>
            <person name="Cook L."/>
            <person name="Abbott R."/>
            <person name="Larson D.E."/>
            <person name="Koboldt D.C."/>
            <person name="Pohl C."/>
            <person name="Smith S."/>
            <person name="Hawkins A."/>
            <person name="Abbott S."/>
            <person name="Locke D."/>
            <person name="Hillier L.W."/>
            <person name="Miner T."/>
            <person name="Fulton L."/>
            <person name="Magrini V."/>
            <person name="Wylie T."/>
            <person name="Glasscock J."/>
            <person name="Conyers J."/>
            <person name="Sander N."/>
            <person name="Shi X."/>
            <person name="Osborne J.R."/>
            <person name="Minx P."/>
            <person name="Gordon D."/>
            <person name="Chinwalla A."/>
            <person name="Zhao Y."/>
            <person name="Ries R.E."/>
            <person name="Payton J.E."/>
            <person name="Westervelt P."/>
            <person name="Tomasson M.H."/>
            <person name="Watson M."/>
            <person name="Baty J."/>
            <person name="Ivanovich J."/>
            <person name="Heath S."/>
            <person name="Shannon W.D."/>
            <person name="Nagarajan R."/>
            <person name="Walter M.J."/>
            <person name="Link D.C."/>
            <person name="Graubert T.A."/>
            <person name="DiPersio J.F."/>
            <person name="Wilson R.K."/>
        </authorList>
    </citation>
    <scope>VARIANT [LARGE SCALE ANALYSIS] LEU-1213</scope>
</reference>
<reference key="10">
    <citation type="journal article" date="2013" name="J. Med. Genet.">
        <title>Identification of pathogenic gene variants in small families with intellectually disabled siblings by exome sequencing.</title>
        <authorList>
            <person name="Schuurs-Hoeijmakers J.H."/>
            <person name="Vulto-van Silfhout A.T."/>
            <person name="Vissers L.E."/>
            <person name="van de Vondervoort I.I."/>
            <person name="van Bon B.W."/>
            <person name="de Ligt J."/>
            <person name="Gilissen C."/>
            <person name="Hehir-Kwa J.Y."/>
            <person name="Neveling K."/>
            <person name="del Rosario M."/>
            <person name="Hira G."/>
            <person name="Reitano S."/>
            <person name="Vitello A."/>
            <person name="Failla P."/>
            <person name="Greco D."/>
            <person name="Fichera M."/>
            <person name="Galesi O."/>
            <person name="Kleefstra T."/>
            <person name="Greally M.T."/>
            <person name="Ockeloen C.W."/>
            <person name="Willemsen M.H."/>
            <person name="Bongers E.M."/>
            <person name="Janssen I.M."/>
            <person name="Pfundt R."/>
            <person name="Veltman J.A."/>
            <person name="Romano C."/>
            <person name="Willemsen M.A."/>
            <person name="van Bokhoven H."/>
            <person name="Brunner H.G."/>
            <person name="de Vries B.B."/>
            <person name="de Brouwer A.P."/>
        </authorList>
    </citation>
    <scope>VARIANT MET-1346</scope>
</reference>
<accession>O14522</accession>
<accession>A8E4R6</accession>
<accession>O43655</accession>
<accession>O75664</accession>
<accession>Q5W0X9</accession>
<accession>Q5W0Y1</accession>
<accession>Q9BR24</accession>
<accession>Q9BR28</accession>
<accession>Q9H0Y8</accession>
<accession>Q9NTL1</accession>
<accession>Q9NU72</accession>
<accession>Q9UBD2</accession>
<accession>Q9UJL7</accession>